<sequence>MEQLTARQTEVLQIITRHLETCGYPPTLREIAAKLGISGTLGVMKHLEALEKKGYLRRQEGSTRGITLCNQNQATSLPIVGVVRAGLLHPAIQDIEGHFAIDRSQLASGGAFFLRVKGDSMIHAHIVEGDLALVRPQPDASNRDIVVAMVEGEATLKRFYREADRIRLQPENPNYEPIIIQKGEQEVSIVGKVVGIYRQME</sequence>
<comment type="function">
    <text evidence="1">Represses a number of genes involved in the response to DNA damage (SOS response), including recA and lexA. In the presence of single-stranded DNA, RecA interacts with LexA causing an autocatalytic cleavage which disrupts the DNA-binding part of LexA, leading to derepression of the SOS regulon and eventually DNA repair.</text>
</comment>
<comment type="catalytic activity">
    <reaction evidence="1">
        <text>Hydrolysis of Ala-|-Gly bond in repressor LexA.</text>
        <dbReference type="EC" id="3.4.21.88"/>
    </reaction>
</comment>
<comment type="subunit">
    <text evidence="1">Homodimer.</text>
</comment>
<comment type="similarity">
    <text evidence="1">Belongs to the peptidase S24 family.</text>
</comment>
<organism>
    <name type="scientific">Geobacter sp. (strain M21)</name>
    <dbReference type="NCBI Taxonomy" id="443144"/>
    <lineage>
        <taxon>Bacteria</taxon>
        <taxon>Pseudomonadati</taxon>
        <taxon>Thermodesulfobacteriota</taxon>
        <taxon>Desulfuromonadia</taxon>
        <taxon>Geobacterales</taxon>
        <taxon>Geobacteraceae</taxon>
        <taxon>Geobacter</taxon>
    </lineage>
</organism>
<accession>C6DZY8</accession>
<protein>
    <recommendedName>
        <fullName evidence="1">LexA repressor</fullName>
        <ecNumber evidence="1">3.4.21.88</ecNumber>
    </recommendedName>
</protein>
<gene>
    <name evidence="1" type="primary">lexA</name>
    <name type="ordered locus">GM21_2490</name>
</gene>
<name>LEXA_GEOSM</name>
<keyword id="KW-0068">Autocatalytic cleavage</keyword>
<keyword id="KW-0227">DNA damage</keyword>
<keyword id="KW-0234">DNA repair</keyword>
<keyword id="KW-0235">DNA replication</keyword>
<keyword id="KW-0238">DNA-binding</keyword>
<keyword id="KW-0378">Hydrolase</keyword>
<keyword id="KW-0678">Repressor</keyword>
<keyword id="KW-0742">SOS response</keyword>
<keyword id="KW-0804">Transcription</keyword>
<keyword id="KW-0805">Transcription regulation</keyword>
<reference key="1">
    <citation type="submission" date="2009-07" db="EMBL/GenBank/DDBJ databases">
        <title>Complete sequence of Geobacter sp. M21.</title>
        <authorList>
            <consortium name="US DOE Joint Genome Institute"/>
            <person name="Lucas S."/>
            <person name="Copeland A."/>
            <person name="Lapidus A."/>
            <person name="Glavina del Rio T."/>
            <person name="Dalin E."/>
            <person name="Tice H."/>
            <person name="Bruce D."/>
            <person name="Goodwin L."/>
            <person name="Pitluck S."/>
            <person name="Saunders E."/>
            <person name="Brettin T."/>
            <person name="Detter J.C."/>
            <person name="Han C."/>
            <person name="Larimer F."/>
            <person name="Land M."/>
            <person name="Hauser L."/>
            <person name="Kyrpides N."/>
            <person name="Ovchinnikova G."/>
            <person name="Lovley D."/>
        </authorList>
    </citation>
    <scope>NUCLEOTIDE SEQUENCE [LARGE SCALE GENOMIC DNA]</scope>
    <source>
        <strain>M21</strain>
    </source>
</reference>
<evidence type="ECO:0000255" key="1">
    <source>
        <dbReference type="HAMAP-Rule" id="MF_00015"/>
    </source>
</evidence>
<dbReference type="EC" id="3.4.21.88" evidence="1"/>
<dbReference type="EMBL" id="CP001661">
    <property type="protein sequence ID" value="ACT18532.1"/>
    <property type="molecule type" value="Genomic_DNA"/>
</dbReference>
<dbReference type="SMR" id="C6DZY8"/>
<dbReference type="STRING" id="443144.GM21_2490"/>
<dbReference type="MEROPS" id="S24.001"/>
<dbReference type="KEGG" id="gem:GM21_2490"/>
<dbReference type="eggNOG" id="COG1974">
    <property type="taxonomic scope" value="Bacteria"/>
</dbReference>
<dbReference type="HOGENOM" id="CLU_066192_45_1_7"/>
<dbReference type="OrthoDB" id="9802364at2"/>
<dbReference type="GO" id="GO:0003677">
    <property type="term" value="F:DNA binding"/>
    <property type="evidence" value="ECO:0007669"/>
    <property type="project" value="UniProtKB-UniRule"/>
</dbReference>
<dbReference type="GO" id="GO:0004252">
    <property type="term" value="F:serine-type endopeptidase activity"/>
    <property type="evidence" value="ECO:0007669"/>
    <property type="project" value="UniProtKB-UniRule"/>
</dbReference>
<dbReference type="GO" id="GO:0006281">
    <property type="term" value="P:DNA repair"/>
    <property type="evidence" value="ECO:0007669"/>
    <property type="project" value="UniProtKB-UniRule"/>
</dbReference>
<dbReference type="GO" id="GO:0006260">
    <property type="term" value="P:DNA replication"/>
    <property type="evidence" value="ECO:0007669"/>
    <property type="project" value="UniProtKB-UniRule"/>
</dbReference>
<dbReference type="GO" id="GO:0045892">
    <property type="term" value="P:negative regulation of DNA-templated transcription"/>
    <property type="evidence" value="ECO:0007669"/>
    <property type="project" value="UniProtKB-UniRule"/>
</dbReference>
<dbReference type="GO" id="GO:0006508">
    <property type="term" value="P:proteolysis"/>
    <property type="evidence" value="ECO:0007669"/>
    <property type="project" value="InterPro"/>
</dbReference>
<dbReference type="GO" id="GO:0009432">
    <property type="term" value="P:SOS response"/>
    <property type="evidence" value="ECO:0007669"/>
    <property type="project" value="UniProtKB-UniRule"/>
</dbReference>
<dbReference type="CDD" id="cd06529">
    <property type="entry name" value="S24_LexA-like"/>
    <property type="match status" value="1"/>
</dbReference>
<dbReference type="FunFam" id="1.10.10.10:FF:000009">
    <property type="entry name" value="LexA repressor"/>
    <property type="match status" value="1"/>
</dbReference>
<dbReference type="FunFam" id="2.10.109.10:FF:000001">
    <property type="entry name" value="LexA repressor"/>
    <property type="match status" value="1"/>
</dbReference>
<dbReference type="Gene3D" id="2.10.109.10">
    <property type="entry name" value="Umud Fragment, subunit A"/>
    <property type="match status" value="1"/>
</dbReference>
<dbReference type="Gene3D" id="1.10.10.10">
    <property type="entry name" value="Winged helix-like DNA-binding domain superfamily/Winged helix DNA-binding domain"/>
    <property type="match status" value="1"/>
</dbReference>
<dbReference type="HAMAP" id="MF_00015">
    <property type="entry name" value="LexA"/>
    <property type="match status" value="1"/>
</dbReference>
<dbReference type="InterPro" id="IPR006200">
    <property type="entry name" value="LexA"/>
</dbReference>
<dbReference type="InterPro" id="IPR039418">
    <property type="entry name" value="LexA-like"/>
</dbReference>
<dbReference type="InterPro" id="IPR036286">
    <property type="entry name" value="LexA/Signal_pep-like_sf"/>
</dbReference>
<dbReference type="InterPro" id="IPR006199">
    <property type="entry name" value="LexA_DNA-bd_dom"/>
</dbReference>
<dbReference type="InterPro" id="IPR050077">
    <property type="entry name" value="LexA_repressor"/>
</dbReference>
<dbReference type="InterPro" id="IPR006197">
    <property type="entry name" value="Peptidase_S24_LexA"/>
</dbReference>
<dbReference type="InterPro" id="IPR015927">
    <property type="entry name" value="Peptidase_S24_S26A/B/C"/>
</dbReference>
<dbReference type="InterPro" id="IPR036388">
    <property type="entry name" value="WH-like_DNA-bd_sf"/>
</dbReference>
<dbReference type="InterPro" id="IPR036390">
    <property type="entry name" value="WH_DNA-bd_sf"/>
</dbReference>
<dbReference type="NCBIfam" id="TIGR00498">
    <property type="entry name" value="lexA"/>
    <property type="match status" value="1"/>
</dbReference>
<dbReference type="PANTHER" id="PTHR33516">
    <property type="entry name" value="LEXA REPRESSOR"/>
    <property type="match status" value="1"/>
</dbReference>
<dbReference type="PANTHER" id="PTHR33516:SF2">
    <property type="entry name" value="LEXA REPRESSOR-RELATED"/>
    <property type="match status" value="1"/>
</dbReference>
<dbReference type="Pfam" id="PF01726">
    <property type="entry name" value="LexA_DNA_bind"/>
    <property type="match status" value="1"/>
</dbReference>
<dbReference type="Pfam" id="PF00717">
    <property type="entry name" value="Peptidase_S24"/>
    <property type="match status" value="1"/>
</dbReference>
<dbReference type="PRINTS" id="PR00726">
    <property type="entry name" value="LEXASERPTASE"/>
</dbReference>
<dbReference type="SUPFAM" id="SSF51306">
    <property type="entry name" value="LexA/Signal peptidase"/>
    <property type="match status" value="1"/>
</dbReference>
<dbReference type="SUPFAM" id="SSF46785">
    <property type="entry name" value="Winged helix' DNA-binding domain"/>
    <property type="match status" value="1"/>
</dbReference>
<feature type="chain" id="PRO_1000201822" description="LexA repressor">
    <location>
        <begin position="1"/>
        <end position="201"/>
    </location>
</feature>
<feature type="DNA-binding region" description="H-T-H motif" evidence="1">
    <location>
        <begin position="28"/>
        <end position="48"/>
    </location>
</feature>
<feature type="active site" description="For autocatalytic cleavage activity" evidence="1">
    <location>
        <position position="120"/>
    </location>
</feature>
<feature type="active site" description="For autocatalytic cleavage activity" evidence="1">
    <location>
        <position position="157"/>
    </location>
</feature>
<feature type="site" description="Cleavage; by autolysis" evidence="1">
    <location>
        <begin position="85"/>
        <end position="86"/>
    </location>
</feature>
<proteinExistence type="inferred from homology"/>